<organism>
    <name type="scientific">Methanococcus vannielii</name>
    <dbReference type="NCBI Taxonomy" id="2187"/>
    <lineage>
        <taxon>Archaea</taxon>
        <taxon>Methanobacteriati</taxon>
        <taxon>Methanobacteriota</taxon>
        <taxon>Methanomada group</taxon>
        <taxon>Methanococci</taxon>
        <taxon>Methanococcales</taxon>
        <taxon>Methanococcaceae</taxon>
        <taxon>Methanococcus</taxon>
    </lineage>
</organism>
<accession>P14033</accession>
<feature type="chain" id="PRO_0000131408" description="Large ribosomal subunit protein uL18">
    <location>
        <begin position="1"/>
        <end position="195"/>
    </location>
</feature>
<proteinExistence type="inferred from homology"/>
<gene>
    <name evidence="1" type="primary">rpl18</name>
</gene>
<protein>
    <recommendedName>
        <fullName evidence="1">Large ribosomal subunit protein uL18</fullName>
    </recommendedName>
    <alternativeName>
        <fullName evidence="2">50S ribosomal protein L18</fullName>
    </alternativeName>
</protein>
<keyword id="KW-0687">Ribonucleoprotein</keyword>
<keyword id="KW-0689">Ribosomal protein</keyword>
<keyword id="KW-0694">RNA-binding</keyword>
<keyword id="KW-0699">rRNA-binding</keyword>
<comment type="function">
    <text evidence="1">This is one of the proteins that bind and probably mediate the attachment of the 5S RNA into the large ribosomal subunit, where it forms part of the central protuberance.</text>
</comment>
<comment type="subunit">
    <text evidence="1">Part of the 50S ribosomal subunit. Contacts the 5S and 23S rRNAs.</text>
</comment>
<comment type="similarity">
    <text evidence="1">Belongs to the universal ribosomal protein uL18 family.</text>
</comment>
<reference key="1">
    <citation type="journal article" date="1989" name="J. Mol. Biol.">
        <title>Organization and structure of the Methanococcus transcriptional unit homologous to the Escherichia coli 'spectinomycin operon'. Implications for the evolutionary relationship of 70 S and 80 S ribosomes.</title>
        <authorList>
            <person name="Auer J."/>
            <person name="Spicker G."/>
            <person name="Boeck A."/>
        </authorList>
    </citation>
    <scope>NUCLEOTIDE SEQUENCE [GENOMIC DNA]</scope>
</reference>
<dbReference type="EMBL" id="X16720">
    <property type="protein sequence ID" value="CAA34699.1"/>
    <property type="molecule type" value="Genomic_DNA"/>
</dbReference>
<dbReference type="PIR" id="S05623">
    <property type="entry name" value="R5MX18"/>
</dbReference>
<dbReference type="SMR" id="P14033"/>
<dbReference type="GO" id="GO:0022625">
    <property type="term" value="C:cytosolic large ribosomal subunit"/>
    <property type="evidence" value="ECO:0007669"/>
    <property type="project" value="TreeGrafter"/>
</dbReference>
<dbReference type="GO" id="GO:0008097">
    <property type="term" value="F:5S rRNA binding"/>
    <property type="evidence" value="ECO:0007669"/>
    <property type="project" value="InterPro"/>
</dbReference>
<dbReference type="GO" id="GO:0003735">
    <property type="term" value="F:structural constituent of ribosome"/>
    <property type="evidence" value="ECO:0007669"/>
    <property type="project" value="InterPro"/>
</dbReference>
<dbReference type="GO" id="GO:0000027">
    <property type="term" value="P:ribosomal large subunit assembly"/>
    <property type="evidence" value="ECO:0007669"/>
    <property type="project" value="TreeGrafter"/>
</dbReference>
<dbReference type="GO" id="GO:0006412">
    <property type="term" value="P:translation"/>
    <property type="evidence" value="ECO:0007669"/>
    <property type="project" value="UniProtKB-UniRule"/>
</dbReference>
<dbReference type="CDD" id="cd00432">
    <property type="entry name" value="Ribosomal_L18_L5e"/>
    <property type="match status" value="1"/>
</dbReference>
<dbReference type="Gene3D" id="3.30.420.100">
    <property type="match status" value="1"/>
</dbReference>
<dbReference type="HAMAP" id="MF_01337_A">
    <property type="entry name" value="Ribosomal_uL18_A"/>
    <property type="match status" value="1"/>
</dbReference>
<dbReference type="InterPro" id="IPR005485">
    <property type="entry name" value="Rbsml_uL18_euk"/>
</dbReference>
<dbReference type="NCBIfam" id="NF006342">
    <property type="entry name" value="PRK08569.1"/>
    <property type="match status" value="1"/>
</dbReference>
<dbReference type="PANTHER" id="PTHR23410:SF12">
    <property type="entry name" value="LARGE RIBOSOMAL SUBUNIT PROTEIN UL18"/>
    <property type="match status" value="1"/>
</dbReference>
<dbReference type="PANTHER" id="PTHR23410">
    <property type="entry name" value="RIBOSOMAL PROTEIN L5-RELATED"/>
    <property type="match status" value="1"/>
</dbReference>
<dbReference type="Pfam" id="PF17144">
    <property type="entry name" value="Ribosomal_L5e"/>
    <property type="match status" value="2"/>
</dbReference>
<dbReference type="SUPFAM" id="SSF53137">
    <property type="entry name" value="Translational machinery components"/>
    <property type="match status" value="1"/>
</dbReference>
<name>RL18_METVA</name>
<evidence type="ECO:0000255" key="1">
    <source>
        <dbReference type="HAMAP-Rule" id="MF_01337"/>
    </source>
</evidence>
<evidence type="ECO:0000305" key="2"/>
<sequence>MIMAQNAKHRVPFRRRREGKTDFRQRLGLLLSGKPRLVARKSLNNIIAQLMAYDEKGDIVLVSAHSRELVKMGYKGHCGNLPAAYLTGLLLGKKAVEEGLEEAILDKGLHRATKGAAIFAVLKGALDAGMDIPCGEEIIADEERLNGTHIKQYAELLKEDEEAYKKQFSKYLEKGLNPEDLPEHFEELKGKILNL</sequence>